<dbReference type="EMBL" id="GU187358">
    <property type="protein sequence ID" value="ACZ95445.1"/>
    <property type="molecule type" value="mRNA"/>
</dbReference>
<dbReference type="Allergome" id="8428">
    <property type="allergen name" value="Ani s 10"/>
</dbReference>
<dbReference type="Allergome" id="8429">
    <property type="allergen name" value="Ani s 10.0101"/>
</dbReference>
<proteinExistence type="evidence at protein level"/>
<protein>
    <recommendedName>
        <fullName evidence="4">Allergen Ani s 10</fullName>
    </recommendedName>
    <allergenName evidence="4">Ani s 10</allergenName>
</protein>
<sequence length="231" mass="23284">MHLITALVLLLQLIHFITSSPIPQEVVGGPGPVVGGSGIGNVWEKANEQAAEQQNIGGPGPVISGSGIGDVWNKANEPAEQQENIGGPGPVVSGSGIGNVWEKANEQAAHQQSIEGPGPVVSGSGIGNVWEKANEQAAHQQSIEGPGPVVSGSGIGDVWNKANEQAAEQQNIGGPGPVISGSGIGNVWEKANEQAAEQQNIGVGGPGPVKSGSGIGNVWEETNEEAASMQA</sequence>
<keyword id="KW-0020">Allergen</keyword>
<keyword id="KW-0677">Repeat</keyword>
<keyword id="KW-0732">Signal</keyword>
<name>ANS10_ANISI</name>
<feature type="signal peptide" evidence="1">
    <location>
        <begin position="1"/>
        <end position="19"/>
    </location>
</feature>
<feature type="chain" id="PRO_5003032612" description="Allergen Ani s 10" evidence="1">
    <location>
        <begin position="20"/>
        <end position="231"/>
    </location>
</feature>
<feature type="repeat" description="1" evidence="5">
    <location>
        <begin position="28"/>
        <end position="56"/>
    </location>
</feature>
<feature type="repeat" description="2" evidence="5">
    <location>
        <begin position="57"/>
        <end position="85"/>
    </location>
</feature>
<feature type="repeat" description="3" evidence="5">
    <location>
        <begin position="86"/>
        <end position="114"/>
    </location>
</feature>
<feature type="repeat" description="4" evidence="5">
    <location>
        <begin position="115"/>
        <end position="143"/>
    </location>
</feature>
<feature type="repeat" description="5" evidence="5">
    <location>
        <begin position="144"/>
        <end position="172"/>
    </location>
</feature>
<feature type="repeat" description="6" evidence="5">
    <location>
        <begin position="173"/>
        <end position="201"/>
    </location>
</feature>
<feature type="repeat" description="7" evidence="5">
    <location>
        <begin position="204"/>
        <end position="231"/>
    </location>
</feature>
<feature type="region of interest" description="6 X 29 AA tandem repeats of [EG]-G-P-G-P-V-[IV]-[SG]-G-S-G-I-G-[ND]-V-W-[NE]-K-A-N-E-[QP]-A-[AE]-[QEH]-Q-[EQ]-[NS]-I" evidence="5">
    <location>
        <begin position="28"/>
        <end position="201"/>
    </location>
</feature>
<feature type="region of interest" description="Disordered" evidence="2">
    <location>
        <begin position="107"/>
        <end position="126"/>
    </location>
</feature>
<feature type="region of interest" description="Disordered" evidence="2">
    <location>
        <begin position="134"/>
        <end position="231"/>
    </location>
</feature>
<feature type="compositionally biased region" description="Low complexity" evidence="2">
    <location>
        <begin position="114"/>
        <end position="123"/>
    </location>
</feature>
<feature type="compositionally biased region" description="Low complexity" evidence="2">
    <location>
        <begin position="143"/>
        <end position="152"/>
    </location>
</feature>
<feature type="compositionally biased region" description="Low complexity" evidence="2">
    <location>
        <begin position="177"/>
        <end position="187"/>
    </location>
</feature>
<reference evidence="6" key="1">
    <citation type="journal article" date="2011" name="Parasitol. Int.">
        <title>Ani s 10, a new Anisakis simplex allergen: Cloning and heterologous expression.</title>
        <authorList>
            <person name="Caballero M.L."/>
            <person name="Umpierrez A."/>
            <person name="Moneo I."/>
            <person name="Rodriguez-Perez R."/>
        </authorList>
    </citation>
    <scope>NUCLEOTIDE SEQUENCE [MRNA]</scope>
    <scope>BIOPHYSICOCHEMICAL PROPERTIES</scope>
    <scope>ALLERGEN</scope>
    <source>
        <tissue evidence="4">Larva</tissue>
    </source>
</reference>
<evidence type="ECO:0000255" key="1"/>
<evidence type="ECO:0000256" key="2">
    <source>
        <dbReference type="SAM" id="MobiDB-lite"/>
    </source>
</evidence>
<evidence type="ECO:0000269" key="3">
    <source>
    </source>
</evidence>
<evidence type="ECO:0000303" key="4">
    <source>
    </source>
</evidence>
<evidence type="ECO:0000305" key="5">
    <source>
    </source>
</evidence>
<evidence type="ECO:0000312" key="6">
    <source>
        <dbReference type="EMBL" id="ACZ95445.1"/>
    </source>
</evidence>
<comment type="biophysicochemical properties">
    <temperatureDependence>
        <text evidence="3">Resistant to heat.</text>
    </temperatureDependence>
</comment>
<comment type="allergen">
    <text evidence="3">Causes an allergic reaction in human. Binds to IgE. A.simplex is a fish parasite that, when accidentally ingested by humans, may cause allergic reactions in sensitized individuals.</text>
</comment>
<accession>D2K835</accession>
<organism evidence="6">
    <name type="scientific">Anisakis simplex</name>
    <name type="common">Herring worm</name>
    <dbReference type="NCBI Taxonomy" id="6269"/>
    <lineage>
        <taxon>Eukaryota</taxon>
        <taxon>Metazoa</taxon>
        <taxon>Ecdysozoa</taxon>
        <taxon>Nematoda</taxon>
        <taxon>Chromadorea</taxon>
        <taxon>Rhabditida</taxon>
        <taxon>Spirurina</taxon>
        <taxon>Ascaridomorpha</taxon>
        <taxon>Ascaridoidea</taxon>
        <taxon>Anisakidae</taxon>
        <taxon>Anisakis</taxon>
        <taxon>Anisakis simplex complex</taxon>
    </lineage>
</organism>